<organism>
    <name type="scientific">Rippkaea orientalis (strain PCC 8801 / RF-1)</name>
    <name type="common">Cyanothece sp. (strain PCC 8801)</name>
    <dbReference type="NCBI Taxonomy" id="41431"/>
    <lineage>
        <taxon>Bacteria</taxon>
        <taxon>Bacillati</taxon>
        <taxon>Cyanobacteriota</taxon>
        <taxon>Cyanophyceae</taxon>
        <taxon>Oscillatoriophycideae</taxon>
        <taxon>Chroococcales</taxon>
        <taxon>Aphanothecaceae</taxon>
        <taxon>Rippkaea</taxon>
        <taxon>Rippkaea orientalis</taxon>
    </lineage>
</organism>
<comment type="function">
    <text evidence="1">Catalyzes the attachment of serine to tRNA(Ser). Is also able to aminoacylate tRNA(Sec) with serine, to form the misacylated tRNA L-seryl-tRNA(Sec), which will be further converted into selenocysteinyl-tRNA(Sec).</text>
</comment>
<comment type="catalytic activity">
    <reaction evidence="1">
        <text>tRNA(Ser) + L-serine + ATP = L-seryl-tRNA(Ser) + AMP + diphosphate + H(+)</text>
        <dbReference type="Rhea" id="RHEA:12292"/>
        <dbReference type="Rhea" id="RHEA-COMP:9669"/>
        <dbReference type="Rhea" id="RHEA-COMP:9703"/>
        <dbReference type="ChEBI" id="CHEBI:15378"/>
        <dbReference type="ChEBI" id="CHEBI:30616"/>
        <dbReference type="ChEBI" id="CHEBI:33019"/>
        <dbReference type="ChEBI" id="CHEBI:33384"/>
        <dbReference type="ChEBI" id="CHEBI:78442"/>
        <dbReference type="ChEBI" id="CHEBI:78533"/>
        <dbReference type="ChEBI" id="CHEBI:456215"/>
        <dbReference type="EC" id="6.1.1.11"/>
    </reaction>
</comment>
<comment type="catalytic activity">
    <reaction evidence="1">
        <text>tRNA(Sec) + L-serine + ATP = L-seryl-tRNA(Sec) + AMP + diphosphate + H(+)</text>
        <dbReference type="Rhea" id="RHEA:42580"/>
        <dbReference type="Rhea" id="RHEA-COMP:9742"/>
        <dbReference type="Rhea" id="RHEA-COMP:10128"/>
        <dbReference type="ChEBI" id="CHEBI:15378"/>
        <dbReference type="ChEBI" id="CHEBI:30616"/>
        <dbReference type="ChEBI" id="CHEBI:33019"/>
        <dbReference type="ChEBI" id="CHEBI:33384"/>
        <dbReference type="ChEBI" id="CHEBI:78442"/>
        <dbReference type="ChEBI" id="CHEBI:78533"/>
        <dbReference type="ChEBI" id="CHEBI:456215"/>
        <dbReference type="EC" id="6.1.1.11"/>
    </reaction>
</comment>
<comment type="pathway">
    <text evidence="1">Aminoacyl-tRNA biosynthesis; selenocysteinyl-tRNA(Sec) biosynthesis; L-seryl-tRNA(Sec) from L-serine and tRNA(Sec): step 1/1.</text>
</comment>
<comment type="subunit">
    <text evidence="1">Homodimer. The tRNA molecule binds across the dimer.</text>
</comment>
<comment type="subcellular location">
    <subcellularLocation>
        <location evidence="1">Cytoplasm</location>
    </subcellularLocation>
</comment>
<comment type="domain">
    <text evidence="1">Consists of two distinct domains, a catalytic core and a N-terminal extension that is involved in tRNA binding.</text>
</comment>
<comment type="similarity">
    <text evidence="1">Belongs to the class-II aminoacyl-tRNA synthetase family. Type-1 seryl-tRNA synthetase subfamily.</text>
</comment>
<feature type="chain" id="PRO_1000199469" description="Serine--tRNA ligase">
    <location>
        <begin position="1"/>
        <end position="427"/>
    </location>
</feature>
<feature type="binding site" evidence="1">
    <location>
        <begin position="236"/>
        <end position="238"/>
    </location>
    <ligand>
        <name>L-serine</name>
        <dbReference type="ChEBI" id="CHEBI:33384"/>
    </ligand>
</feature>
<feature type="binding site" evidence="1">
    <location>
        <begin position="267"/>
        <end position="269"/>
    </location>
    <ligand>
        <name>ATP</name>
        <dbReference type="ChEBI" id="CHEBI:30616"/>
    </ligand>
</feature>
<feature type="binding site" evidence="1">
    <location>
        <position position="290"/>
    </location>
    <ligand>
        <name>L-serine</name>
        <dbReference type="ChEBI" id="CHEBI:33384"/>
    </ligand>
</feature>
<feature type="binding site" evidence="1">
    <location>
        <begin position="354"/>
        <end position="357"/>
    </location>
    <ligand>
        <name>ATP</name>
        <dbReference type="ChEBI" id="CHEBI:30616"/>
    </ligand>
</feature>
<feature type="binding site" evidence="1">
    <location>
        <position position="390"/>
    </location>
    <ligand>
        <name>L-serine</name>
        <dbReference type="ChEBI" id="CHEBI:33384"/>
    </ligand>
</feature>
<accession>B7JY63</accession>
<name>SYS_RIPO1</name>
<dbReference type="EC" id="6.1.1.11" evidence="1"/>
<dbReference type="EMBL" id="CP001287">
    <property type="protein sequence ID" value="ACK67165.1"/>
    <property type="molecule type" value="Genomic_DNA"/>
</dbReference>
<dbReference type="RefSeq" id="WP_012596426.1">
    <property type="nucleotide sequence ID" value="NC_011726.1"/>
</dbReference>
<dbReference type="SMR" id="B7JY63"/>
<dbReference type="STRING" id="41431.PCC8801_3186"/>
<dbReference type="KEGG" id="cyp:PCC8801_3186"/>
<dbReference type="eggNOG" id="COG0172">
    <property type="taxonomic scope" value="Bacteria"/>
</dbReference>
<dbReference type="HOGENOM" id="CLU_023797_1_1_3"/>
<dbReference type="OrthoDB" id="9804647at2"/>
<dbReference type="UniPathway" id="UPA00906">
    <property type="reaction ID" value="UER00895"/>
</dbReference>
<dbReference type="Proteomes" id="UP000008204">
    <property type="component" value="Chromosome"/>
</dbReference>
<dbReference type="GO" id="GO:0005737">
    <property type="term" value="C:cytoplasm"/>
    <property type="evidence" value="ECO:0007669"/>
    <property type="project" value="UniProtKB-SubCell"/>
</dbReference>
<dbReference type="GO" id="GO:0005524">
    <property type="term" value="F:ATP binding"/>
    <property type="evidence" value="ECO:0007669"/>
    <property type="project" value="UniProtKB-UniRule"/>
</dbReference>
<dbReference type="GO" id="GO:0004828">
    <property type="term" value="F:serine-tRNA ligase activity"/>
    <property type="evidence" value="ECO:0007669"/>
    <property type="project" value="UniProtKB-UniRule"/>
</dbReference>
<dbReference type="GO" id="GO:0016260">
    <property type="term" value="P:selenocysteine biosynthetic process"/>
    <property type="evidence" value="ECO:0007669"/>
    <property type="project" value="UniProtKB-UniRule"/>
</dbReference>
<dbReference type="GO" id="GO:0006434">
    <property type="term" value="P:seryl-tRNA aminoacylation"/>
    <property type="evidence" value="ECO:0007669"/>
    <property type="project" value="UniProtKB-UniRule"/>
</dbReference>
<dbReference type="CDD" id="cd00770">
    <property type="entry name" value="SerRS_core"/>
    <property type="match status" value="1"/>
</dbReference>
<dbReference type="Gene3D" id="3.30.930.10">
    <property type="entry name" value="Bira Bifunctional Protein, Domain 2"/>
    <property type="match status" value="1"/>
</dbReference>
<dbReference type="Gene3D" id="1.10.287.40">
    <property type="entry name" value="Serine-tRNA synthetase, tRNA binding domain"/>
    <property type="match status" value="1"/>
</dbReference>
<dbReference type="HAMAP" id="MF_00176">
    <property type="entry name" value="Ser_tRNA_synth_type1"/>
    <property type="match status" value="1"/>
</dbReference>
<dbReference type="InterPro" id="IPR002314">
    <property type="entry name" value="aa-tRNA-synt_IIb"/>
</dbReference>
<dbReference type="InterPro" id="IPR006195">
    <property type="entry name" value="aa-tRNA-synth_II"/>
</dbReference>
<dbReference type="InterPro" id="IPR045864">
    <property type="entry name" value="aa-tRNA-synth_II/BPL/LPL"/>
</dbReference>
<dbReference type="InterPro" id="IPR002317">
    <property type="entry name" value="Ser-tRNA-ligase_type_1"/>
</dbReference>
<dbReference type="InterPro" id="IPR015866">
    <property type="entry name" value="Ser-tRNA-synth_1_N"/>
</dbReference>
<dbReference type="InterPro" id="IPR042103">
    <property type="entry name" value="SerRS_1_N_sf"/>
</dbReference>
<dbReference type="InterPro" id="IPR033729">
    <property type="entry name" value="SerRS_core"/>
</dbReference>
<dbReference type="InterPro" id="IPR010978">
    <property type="entry name" value="tRNA-bd_arm"/>
</dbReference>
<dbReference type="NCBIfam" id="TIGR00414">
    <property type="entry name" value="serS"/>
    <property type="match status" value="1"/>
</dbReference>
<dbReference type="PANTHER" id="PTHR43697:SF1">
    <property type="entry name" value="SERINE--TRNA LIGASE"/>
    <property type="match status" value="1"/>
</dbReference>
<dbReference type="PANTHER" id="PTHR43697">
    <property type="entry name" value="SERYL-TRNA SYNTHETASE"/>
    <property type="match status" value="1"/>
</dbReference>
<dbReference type="Pfam" id="PF02403">
    <property type="entry name" value="Seryl_tRNA_N"/>
    <property type="match status" value="1"/>
</dbReference>
<dbReference type="Pfam" id="PF00587">
    <property type="entry name" value="tRNA-synt_2b"/>
    <property type="match status" value="1"/>
</dbReference>
<dbReference type="PIRSF" id="PIRSF001529">
    <property type="entry name" value="Ser-tRNA-synth_IIa"/>
    <property type="match status" value="1"/>
</dbReference>
<dbReference type="PRINTS" id="PR00981">
    <property type="entry name" value="TRNASYNTHSER"/>
</dbReference>
<dbReference type="SUPFAM" id="SSF55681">
    <property type="entry name" value="Class II aaRS and biotin synthetases"/>
    <property type="match status" value="1"/>
</dbReference>
<dbReference type="SUPFAM" id="SSF46589">
    <property type="entry name" value="tRNA-binding arm"/>
    <property type="match status" value="1"/>
</dbReference>
<dbReference type="PROSITE" id="PS50862">
    <property type="entry name" value="AA_TRNA_LIGASE_II"/>
    <property type="match status" value="1"/>
</dbReference>
<keyword id="KW-0030">Aminoacyl-tRNA synthetase</keyword>
<keyword id="KW-0067">ATP-binding</keyword>
<keyword id="KW-0963">Cytoplasm</keyword>
<keyword id="KW-0436">Ligase</keyword>
<keyword id="KW-0547">Nucleotide-binding</keyword>
<keyword id="KW-0648">Protein biosynthesis</keyword>
<keyword id="KW-1185">Reference proteome</keyword>
<protein>
    <recommendedName>
        <fullName evidence="1">Serine--tRNA ligase</fullName>
        <ecNumber evidence="1">6.1.1.11</ecNumber>
    </recommendedName>
    <alternativeName>
        <fullName evidence="1">Seryl-tRNA synthetase</fullName>
        <shortName evidence="1">SerRS</shortName>
    </alternativeName>
    <alternativeName>
        <fullName evidence="1">Seryl-tRNA(Ser/Sec) synthetase</fullName>
    </alternativeName>
</protein>
<proteinExistence type="inferred from homology"/>
<evidence type="ECO:0000255" key="1">
    <source>
        <dbReference type="HAMAP-Rule" id="MF_00176"/>
    </source>
</evidence>
<sequence>MLDLKQIRENPDYIQELLNRRSASNEYDLTPILDRDRQQRDIEATRTQLQARSNEIGKLIGQKMKSGINPQSEEIQALKTEGNDLKTQLSELEPQEKQLKSEIEALLLQLPNLPSESTPLGKSEADNVEVRRWGDEYLPKIEVLPHWEIAERLGILEVERAVKIAQSRFIALVGAGAALERALINFMLDCQINAGYLEVIPPVLINSDSLQGTGQLPKFAEESFKCSEDDLWLAPTAEVPVTNLYRDEIVEAEQLPIKHCAYTPCFRREAGSYGKDTRGLIRLHQFNKVELVKLVHPETSEAEHQSLVNNAEAILQALKLPYRVLELCTGDLGFGATKCYDLEVWLPSSGTYREISSCSNCGDFQARRANIRLKEKGKKGTQYVHTLNGSGLAVGRTMAAILENYQQSNGTVKVPDVLQPYLKREIL</sequence>
<gene>
    <name evidence="1" type="primary">serS</name>
    <name type="ordered locus">PCC8801_3186</name>
</gene>
<reference key="1">
    <citation type="journal article" date="2011" name="MBio">
        <title>Novel metabolic attributes of the genus Cyanothece, comprising a group of unicellular nitrogen-fixing Cyanobacteria.</title>
        <authorList>
            <person name="Bandyopadhyay A."/>
            <person name="Elvitigala T."/>
            <person name="Welsh E."/>
            <person name="Stockel J."/>
            <person name="Liberton M."/>
            <person name="Min H."/>
            <person name="Sherman L.A."/>
            <person name="Pakrasi H.B."/>
        </authorList>
    </citation>
    <scope>NUCLEOTIDE SEQUENCE [LARGE SCALE GENOMIC DNA]</scope>
    <source>
        <strain>PCC 8801 / RF-1</strain>
    </source>
</reference>